<feature type="chain" id="PRO_0000230671" description="Mitochondrial import receptor subunit TOM5 homolog">
    <location>
        <begin position="1"/>
        <end position="51"/>
    </location>
</feature>
<feature type="transmembrane region" description="Helical" evidence="1">
    <location>
        <begin position="27"/>
        <end position="45"/>
    </location>
</feature>
<feature type="modified residue" description="N-acetylmethionine" evidence="4">
    <location>
        <position position="1"/>
    </location>
</feature>
<feature type="cross-link" description="Glycyl lysine isopeptide (Lys-Gly) (interchain with G-Cter in SUMO2)" evidence="5">
    <location>
        <position position="10"/>
    </location>
</feature>
<feature type="splice variant" id="VSP_046982" description="In isoform 2." evidence="3">
    <original>TPFILKKLDSI</original>
    <variation>SECLPGCDCETSGELTDGHPLTLRGHRGLRTELNGSGEQGGCALKATGICAV</variation>
    <location>
        <begin position="41"/>
        <end position="51"/>
    </location>
</feature>
<feature type="splice variant" id="VSP_046983" description="In isoform 3." evidence="3">
    <original>T</original>
    <variation>SECLPGCDCETSGELTDGHPLTLRGHRGLRTELNA</variation>
    <location>
        <position position="41"/>
    </location>
</feature>
<feature type="helix" evidence="6">
    <location>
        <begin position="14"/>
        <end position="47"/>
    </location>
</feature>
<evidence type="ECO:0000255" key="1"/>
<evidence type="ECO:0000269" key="2">
    <source>
    </source>
</evidence>
<evidence type="ECO:0000305" key="3"/>
<evidence type="ECO:0007744" key="4">
    <source>
    </source>
</evidence>
<evidence type="ECO:0007744" key="5">
    <source>
    </source>
</evidence>
<evidence type="ECO:0007829" key="6">
    <source>
        <dbReference type="PDB" id="7VD2"/>
    </source>
</evidence>
<name>TOM5_HUMAN</name>
<keyword id="KW-0002">3D-structure</keyword>
<keyword id="KW-0007">Acetylation</keyword>
<keyword id="KW-0025">Alternative splicing</keyword>
<keyword id="KW-1017">Isopeptide bond</keyword>
<keyword id="KW-0472">Membrane</keyword>
<keyword id="KW-0496">Mitochondrion</keyword>
<keyword id="KW-1000">Mitochondrion outer membrane</keyword>
<keyword id="KW-0653">Protein transport</keyword>
<keyword id="KW-1267">Proteomics identification</keyword>
<keyword id="KW-1185">Reference proteome</keyword>
<keyword id="KW-0812">Transmembrane</keyword>
<keyword id="KW-1133">Transmembrane helix</keyword>
<keyword id="KW-0813">Transport</keyword>
<keyword id="KW-0832">Ubl conjugation</keyword>
<dbReference type="EMBL" id="AB435233">
    <property type="protein sequence ID" value="BAG30953.1"/>
    <property type="molecule type" value="mRNA"/>
</dbReference>
<dbReference type="EMBL" id="AL513165">
    <property type="status" value="NOT_ANNOTATED_CDS"/>
    <property type="molecule type" value="Genomic_DNA"/>
</dbReference>
<dbReference type="EMBL" id="BC034247">
    <property type="protein sequence ID" value="AAH34247.1"/>
    <property type="molecule type" value="mRNA"/>
</dbReference>
<dbReference type="CCDS" id="CCDS43803.1">
    <molecule id="Q8N4H5-1"/>
</dbReference>
<dbReference type="CCDS" id="CCDS47967.1">
    <molecule id="Q8N4H5-3"/>
</dbReference>
<dbReference type="CCDS" id="CCDS47968.1">
    <molecule id="Q8N4H5-2"/>
</dbReference>
<dbReference type="RefSeq" id="NP_001001790.1">
    <molecule id="Q8N4H5-1"/>
    <property type="nucleotide sequence ID" value="NM_001001790.3"/>
</dbReference>
<dbReference type="RefSeq" id="NP_001127956.1">
    <molecule id="Q8N4H5-2"/>
    <property type="nucleotide sequence ID" value="NM_001134484.2"/>
</dbReference>
<dbReference type="RefSeq" id="NP_001127957.1">
    <molecule id="Q8N4H5-3"/>
    <property type="nucleotide sequence ID" value="NM_001134485.2"/>
</dbReference>
<dbReference type="PDB" id="7CK6">
    <property type="method" value="EM"/>
    <property type="resolution" value="3.40 A"/>
    <property type="chains" value="I/J=1-51"/>
</dbReference>
<dbReference type="PDB" id="7CP9">
    <property type="method" value="EM"/>
    <property type="resolution" value="3.00 A"/>
    <property type="chains" value="A/B=1-51"/>
</dbReference>
<dbReference type="PDB" id="7VBY">
    <property type="method" value="EM"/>
    <property type="resolution" value="2.54 A"/>
    <property type="chains" value="D/E=1-51"/>
</dbReference>
<dbReference type="PDB" id="7VC4">
    <property type="method" value="EM"/>
    <property type="resolution" value="3.74 A"/>
    <property type="chains" value="D/E=1-51"/>
</dbReference>
<dbReference type="PDB" id="7VD2">
    <property type="method" value="EM"/>
    <property type="resolution" value="2.53 A"/>
    <property type="chains" value="D/E=1-51"/>
</dbReference>
<dbReference type="PDB" id="7VDD">
    <property type="method" value="EM"/>
    <property type="resolution" value="3.74 A"/>
    <property type="chains" value="D/E=1-51"/>
</dbReference>
<dbReference type="PDB" id="8XVA">
    <property type="method" value="EM"/>
    <property type="resolution" value="5.92 A"/>
    <property type="chains" value="D/E=1-51"/>
</dbReference>
<dbReference type="PDB" id="9EIH">
    <property type="method" value="EM"/>
    <property type="resolution" value="3.10 A"/>
    <property type="chains" value="K/L/Y/Z=1-51"/>
</dbReference>
<dbReference type="PDB" id="9EII">
    <property type="method" value="EM"/>
    <property type="resolution" value="2.75 A"/>
    <property type="chains" value="L/Z=1-51"/>
</dbReference>
<dbReference type="PDB" id="9EIJ">
    <property type="method" value="EM"/>
    <property type="resolution" value="3.30 A"/>
    <property type="chains" value="K/L/Z=1-51"/>
</dbReference>
<dbReference type="PDBsum" id="7CK6"/>
<dbReference type="PDBsum" id="7CP9"/>
<dbReference type="PDBsum" id="7VBY"/>
<dbReference type="PDBsum" id="7VC4"/>
<dbReference type="PDBsum" id="7VD2"/>
<dbReference type="PDBsum" id="7VDD"/>
<dbReference type="PDBsum" id="8XVA"/>
<dbReference type="PDBsum" id="9EIH"/>
<dbReference type="PDBsum" id="9EII"/>
<dbReference type="PDBsum" id="9EIJ"/>
<dbReference type="EMDB" id="EMD-30382"/>
<dbReference type="EMDB" id="EMD-30421"/>
<dbReference type="EMDB" id="EMD-31885"/>
<dbReference type="EMDB" id="EMD-31888"/>
<dbReference type="EMDB" id="EMD-31904"/>
<dbReference type="EMDB" id="EMD-31914"/>
<dbReference type="EMDB" id="EMD-38694"/>
<dbReference type="EMDB" id="EMD-48083"/>
<dbReference type="EMDB" id="EMD-48084"/>
<dbReference type="EMDB" id="EMD-48085"/>
<dbReference type="SMR" id="Q8N4H5"/>
<dbReference type="BioGRID" id="135117">
    <property type="interactions" value="122"/>
</dbReference>
<dbReference type="ComplexPortal" id="CPX-6121">
    <property type="entry name" value="TOM40 mitochondrial outer membrane translocase complex"/>
</dbReference>
<dbReference type="CORUM" id="Q8N4H5"/>
<dbReference type="FunCoup" id="Q8N4H5">
    <property type="interactions" value="800"/>
</dbReference>
<dbReference type="IntAct" id="Q8N4H5">
    <property type="interactions" value="13"/>
</dbReference>
<dbReference type="STRING" id="9606.ENSP00000438204"/>
<dbReference type="GlyGen" id="Q8N4H5">
    <property type="glycosylation" value="1 site, 1 O-linked glycan (1 site)"/>
</dbReference>
<dbReference type="iPTMnet" id="Q8N4H5"/>
<dbReference type="PhosphoSitePlus" id="Q8N4H5"/>
<dbReference type="BioMuta" id="TOMM5"/>
<dbReference type="jPOST" id="Q8N4H5"/>
<dbReference type="MassIVE" id="Q8N4H5"/>
<dbReference type="PaxDb" id="9606-ENSP00000438204"/>
<dbReference type="PeptideAtlas" id="Q8N4H5"/>
<dbReference type="ProteomicsDB" id="27920"/>
<dbReference type="ProteomicsDB" id="63112"/>
<dbReference type="ProteomicsDB" id="71934">
    <molecule id="Q8N4H5-1"/>
</dbReference>
<dbReference type="Pumba" id="Q8N4H5"/>
<dbReference type="TopDownProteomics" id="Q8N4H5-1">
    <molecule id="Q8N4H5-1"/>
</dbReference>
<dbReference type="Antibodypedia" id="62917">
    <property type="antibodies" value="23 antibodies from 11 providers"/>
</dbReference>
<dbReference type="DNASU" id="401505"/>
<dbReference type="Ensembl" id="ENST00000321301.7">
    <molecule id="Q8N4H5-1"/>
    <property type="protein sequence ID" value="ENSP00000313584.6"/>
    <property type="gene ID" value="ENSG00000175768.13"/>
</dbReference>
<dbReference type="Ensembl" id="ENST00000377773.9">
    <molecule id="Q8N4H5-3"/>
    <property type="protein sequence ID" value="ENSP00000367004.5"/>
    <property type="gene ID" value="ENSG00000175768.13"/>
</dbReference>
<dbReference type="Ensembl" id="ENST00000544379.1">
    <molecule id="Q8N4H5-2"/>
    <property type="protein sequence ID" value="ENSP00000438204.1"/>
    <property type="gene ID" value="ENSG00000175768.13"/>
</dbReference>
<dbReference type="GeneID" id="401505"/>
<dbReference type="KEGG" id="hsa:401505"/>
<dbReference type="MANE-Select" id="ENST00000321301.7">
    <property type="protein sequence ID" value="ENSP00000313584.6"/>
    <property type="RefSeq nucleotide sequence ID" value="NM_001001790.3"/>
    <property type="RefSeq protein sequence ID" value="NP_001001790.1"/>
</dbReference>
<dbReference type="UCSC" id="uc004aaf.4">
    <molecule id="Q8N4H5-1"/>
    <property type="organism name" value="human"/>
</dbReference>
<dbReference type="AGR" id="HGNC:31369"/>
<dbReference type="CTD" id="401505"/>
<dbReference type="DisGeNET" id="401505"/>
<dbReference type="GeneCards" id="TOMM5"/>
<dbReference type="HGNC" id="HGNC:31369">
    <property type="gene designation" value="TOMM5"/>
</dbReference>
<dbReference type="HPA" id="ENSG00000175768">
    <property type="expression patterns" value="Low tissue specificity"/>
</dbReference>
<dbReference type="MIM" id="616169">
    <property type="type" value="gene"/>
</dbReference>
<dbReference type="neXtProt" id="NX_Q8N4H5"/>
<dbReference type="OpenTargets" id="ENSG00000175768"/>
<dbReference type="PharmGKB" id="PA164726670"/>
<dbReference type="VEuPathDB" id="HostDB:ENSG00000175768"/>
<dbReference type="eggNOG" id="ENOG502S99E">
    <property type="taxonomic scope" value="Eukaryota"/>
</dbReference>
<dbReference type="GeneTree" id="ENSGT00940000163364"/>
<dbReference type="HOGENOM" id="CLU_182400_1_0_1"/>
<dbReference type="InParanoid" id="Q8N4H5"/>
<dbReference type="OMA" id="QIYCSSE"/>
<dbReference type="OrthoDB" id="8893106at2759"/>
<dbReference type="PAN-GO" id="Q8N4H5">
    <property type="GO annotations" value="1 GO annotation based on evolutionary models"/>
</dbReference>
<dbReference type="PhylomeDB" id="Q8N4H5"/>
<dbReference type="TreeFam" id="TF333449"/>
<dbReference type="PathwayCommons" id="Q8N4H5"/>
<dbReference type="Reactome" id="R-HSA-1268020">
    <property type="pathway name" value="Mitochondrial protein import"/>
</dbReference>
<dbReference type="Reactome" id="R-HSA-5205685">
    <property type="pathway name" value="PINK1-PRKN Mediated Mitophagy"/>
</dbReference>
<dbReference type="SignaLink" id="Q8N4H5"/>
<dbReference type="SIGNOR" id="Q8N4H5"/>
<dbReference type="BioGRID-ORCS" id="401505">
    <property type="hits" value="12 hits in 1145 CRISPR screens"/>
</dbReference>
<dbReference type="ChiTaRS" id="TOMM5">
    <property type="organism name" value="human"/>
</dbReference>
<dbReference type="GenomeRNAi" id="401505"/>
<dbReference type="Pharos" id="Q8N4H5">
    <property type="development level" value="Tdark"/>
</dbReference>
<dbReference type="PRO" id="PR:Q8N4H5"/>
<dbReference type="Proteomes" id="UP000005640">
    <property type="component" value="Chromosome 9"/>
</dbReference>
<dbReference type="RNAct" id="Q8N4H5">
    <property type="molecule type" value="protein"/>
</dbReference>
<dbReference type="Bgee" id="ENSG00000175768">
    <property type="expression patterns" value="Expressed in calcaneal tendon and 101 other cell types or tissues"/>
</dbReference>
<dbReference type="ExpressionAtlas" id="Q8N4H5">
    <property type="expression patterns" value="baseline and differential"/>
</dbReference>
<dbReference type="GO" id="GO:0005741">
    <property type="term" value="C:mitochondrial outer membrane"/>
    <property type="evidence" value="ECO:0000304"/>
    <property type="project" value="Reactome"/>
</dbReference>
<dbReference type="GO" id="GO:0005742">
    <property type="term" value="C:mitochondrial outer membrane translocase complex"/>
    <property type="evidence" value="ECO:0000314"/>
    <property type="project" value="UniProtKB"/>
</dbReference>
<dbReference type="GO" id="GO:0005739">
    <property type="term" value="C:mitochondrion"/>
    <property type="evidence" value="ECO:0000314"/>
    <property type="project" value="HPA"/>
</dbReference>
<dbReference type="GO" id="GO:0140596">
    <property type="term" value="C:TOM complex"/>
    <property type="evidence" value="ECO:0000303"/>
    <property type="project" value="ComplexPortal"/>
</dbReference>
<dbReference type="GO" id="GO:0045040">
    <property type="term" value="P:protein insertion into mitochondrial outer membrane"/>
    <property type="evidence" value="ECO:0000303"/>
    <property type="project" value="ComplexPortal"/>
</dbReference>
<dbReference type="GO" id="GO:0006626">
    <property type="term" value="P:protein targeting to mitochondrion"/>
    <property type="evidence" value="ECO:0000305"/>
    <property type="project" value="UniProtKB"/>
</dbReference>
<dbReference type="InterPro" id="IPR019603">
    <property type="entry name" value="Tom5"/>
</dbReference>
<dbReference type="InterPro" id="IPR029179">
    <property type="entry name" value="TOMM5_metazoa"/>
</dbReference>
<dbReference type="PANTHER" id="PTHR28436">
    <property type="entry name" value="MITOCHONDRIAL IMPORT RECEPTOR SUBUNIT TOM5 HOMOLOG"/>
    <property type="match status" value="1"/>
</dbReference>
<dbReference type="PANTHER" id="PTHR28436:SF1">
    <property type="entry name" value="MITOCHONDRIAL IMPORT RECEPTOR SUBUNIT TOM5 HOMOLOG"/>
    <property type="match status" value="1"/>
</dbReference>
<dbReference type="Pfam" id="PF10642">
    <property type="entry name" value="Tom5"/>
    <property type="match status" value="1"/>
</dbReference>
<organism>
    <name type="scientific">Homo sapiens</name>
    <name type="common">Human</name>
    <dbReference type="NCBI Taxonomy" id="9606"/>
    <lineage>
        <taxon>Eukaryota</taxon>
        <taxon>Metazoa</taxon>
        <taxon>Chordata</taxon>
        <taxon>Craniata</taxon>
        <taxon>Vertebrata</taxon>
        <taxon>Euteleostomi</taxon>
        <taxon>Mammalia</taxon>
        <taxon>Eutheria</taxon>
        <taxon>Euarchontoglires</taxon>
        <taxon>Primates</taxon>
        <taxon>Haplorrhini</taxon>
        <taxon>Catarrhini</taxon>
        <taxon>Hominidae</taxon>
        <taxon>Homo</taxon>
    </lineage>
</organism>
<protein>
    <recommendedName>
        <fullName>Mitochondrial import receptor subunit TOM5 homolog</fullName>
    </recommendedName>
</protein>
<accession>Q8N4H5</accession>
<accession>B2DG07</accession>
<accession>F6S928</accession>
<accession>Q5JRT7</accession>
<comment type="subunit">
    <text evidence="2">Forms part of the preprotein translocase complex of the outer mitochondrial membrane (TOM complex) which consists of at least 7 different proteins (TOMM5, TOMM6, TOMM7, TOMM20, TOMM22, TOMM40 and TOMM70).</text>
</comment>
<comment type="subcellular location">
    <subcellularLocation>
        <location evidence="2">Mitochondrion outer membrane</location>
        <topology evidence="2">Single-pass membrane protein</topology>
    </subcellularLocation>
</comment>
<comment type="alternative products">
    <event type="alternative splicing"/>
    <isoform>
        <id>Q8N4H5-1</id>
        <name>1</name>
        <sequence type="displayed"/>
    </isoform>
    <isoform>
        <id>Q8N4H5-2</id>
        <name>2</name>
        <sequence type="described" ref="VSP_046982"/>
    </isoform>
    <isoform>
        <id>Q8N4H5-3</id>
        <name>3</name>
        <sequence type="described" ref="VSP_046983"/>
    </isoform>
</comment>
<comment type="similarity">
    <text evidence="3">Belongs to the Tom5 family.</text>
</comment>
<gene>
    <name type="primary">TOMM5</name>
    <name type="synonym">C9orf105</name>
    <name type="synonym">TOM5</name>
</gene>
<sequence length="51" mass="6035">MFRIEGLAPKLDPEEMKRKMREDVISSIRNFLIYVALLRVTPFILKKLDSI</sequence>
<reference key="1">
    <citation type="journal article" date="2008" name="Biochem. Biophys. Res. Commun.">
        <title>Identification of Tom5 and Tom6 in the preprotein translocase complex of human mitochondrial outer membrane.</title>
        <authorList>
            <person name="Kato H."/>
            <person name="Mihara K."/>
        </authorList>
    </citation>
    <scope>NUCLEOTIDE SEQUENCE [MRNA]</scope>
    <scope>IDENTIFICATION IN THE TOM COMPLEX</scope>
    <scope>SUBCELLULAR LOCATION</scope>
</reference>
<reference key="2">
    <citation type="journal article" date="2004" name="Nature">
        <title>DNA sequence and analysis of human chromosome 9.</title>
        <authorList>
            <person name="Humphray S.J."/>
            <person name="Oliver K."/>
            <person name="Hunt A.R."/>
            <person name="Plumb R.W."/>
            <person name="Loveland J.E."/>
            <person name="Howe K.L."/>
            <person name="Andrews T.D."/>
            <person name="Searle S."/>
            <person name="Hunt S.E."/>
            <person name="Scott C.E."/>
            <person name="Jones M.C."/>
            <person name="Ainscough R."/>
            <person name="Almeida J.P."/>
            <person name="Ambrose K.D."/>
            <person name="Ashwell R.I.S."/>
            <person name="Babbage A.K."/>
            <person name="Babbage S."/>
            <person name="Bagguley C.L."/>
            <person name="Bailey J."/>
            <person name="Banerjee R."/>
            <person name="Barker D.J."/>
            <person name="Barlow K.F."/>
            <person name="Bates K."/>
            <person name="Beasley H."/>
            <person name="Beasley O."/>
            <person name="Bird C.P."/>
            <person name="Bray-Allen S."/>
            <person name="Brown A.J."/>
            <person name="Brown J.Y."/>
            <person name="Burford D."/>
            <person name="Burrill W."/>
            <person name="Burton J."/>
            <person name="Carder C."/>
            <person name="Carter N.P."/>
            <person name="Chapman J.C."/>
            <person name="Chen Y."/>
            <person name="Clarke G."/>
            <person name="Clark S.Y."/>
            <person name="Clee C.M."/>
            <person name="Clegg S."/>
            <person name="Collier R.E."/>
            <person name="Corby N."/>
            <person name="Crosier M."/>
            <person name="Cummings A.T."/>
            <person name="Davies J."/>
            <person name="Dhami P."/>
            <person name="Dunn M."/>
            <person name="Dutta I."/>
            <person name="Dyer L.W."/>
            <person name="Earthrowl M.E."/>
            <person name="Faulkner L."/>
            <person name="Fleming C.J."/>
            <person name="Frankish A."/>
            <person name="Frankland J.A."/>
            <person name="French L."/>
            <person name="Fricker D.G."/>
            <person name="Garner P."/>
            <person name="Garnett J."/>
            <person name="Ghori J."/>
            <person name="Gilbert J.G.R."/>
            <person name="Glison C."/>
            <person name="Grafham D.V."/>
            <person name="Gribble S."/>
            <person name="Griffiths C."/>
            <person name="Griffiths-Jones S."/>
            <person name="Grocock R."/>
            <person name="Guy J."/>
            <person name="Hall R.E."/>
            <person name="Hammond S."/>
            <person name="Harley J.L."/>
            <person name="Harrison E.S.I."/>
            <person name="Hart E.A."/>
            <person name="Heath P.D."/>
            <person name="Henderson C.D."/>
            <person name="Hopkins B.L."/>
            <person name="Howard P.J."/>
            <person name="Howden P.J."/>
            <person name="Huckle E."/>
            <person name="Johnson C."/>
            <person name="Johnson D."/>
            <person name="Joy A.A."/>
            <person name="Kay M."/>
            <person name="Keenan S."/>
            <person name="Kershaw J.K."/>
            <person name="Kimberley A.M."/>
            <person name="King A."/>
            <person name="Knights A."/>
            <person name="Laird G.K."/>
            <person name="Langford C."/>
            <person name="Lawlor S."/>
            <person name="Leongamornlert D.A."/>
            <person name="Leversha M."/>
            <person name="Lloyd C."/>
            <person name="Lloyd D.M."/>
            <person name="Lovell J."/>
            <person name="Martin S."/>
            <person name="Mashreghi-Mohammadi M."/>
            <person name="Matthews L."/>
            <person name="McLaren S."/>
            <person name="McLay K.E."/>
            <person name="McMurray A."/>
            <person name="Milne S."/>
            <person name="Nickerson T."/>
            <person name="Nisbett J."/>
            <person name="Nordsiek G."/>
            <person name="Pearce A.V."/>
            <person name="Peck A.I."/>
            <person name="Porter K.M."/>
            <person name="Pandian R."/>
            <person name="Pelan S."/>
            <person name="Phillimore B."/>
            <person name="Povey S."/>
            <person name="Ramsey Y."/>
            <person name="Rand V."/>
            <person name="Scharfe M."/>
            <person name="Sehra H.K."/>
            <person name="Shownkeen R."/>
            <person name="Sims S.K."/>
            <person name="Skuce C.D."/>
            <person name="Smith M."/>
            <person name="Steward C.A."/>
            <person name="Swarbreck D."/>
            <person name="Sycamore N."/>
            <person name="Tester J."/>
            <person name="Thorpe A."/>
            <person name="Tracey A."/>
            <person name="Tromans A."/>
            <person name="Thomas D.W."/>
            <person name="Wall M."/>
            <person name="Wallis J.M."/>
            <person name="West A.P."/>
            <person name="Whitehead S.L."/>
            <person name="Willey D.L."/>
            <person name="Williams S.A."/>
            <person name="Wilming L."/>
            <person name="Wray P.W."/>
            <person name="Young L."/>
            <person name="Ashurst J.L."/>
            <person name="Coulson A."/>
            <person name="Blocker H."/>
            <person name="Durbin R.M."/>
            <person name="Sulston J.E."/>
            <person name="Hubbard T."/>
            <person name="Jackson M.J."/>
            <person name="Bentley D.R."/>
            <person name="Beck S."/>
            <person name="Rogers J."/>
            <person name="Dunham I."/>
        </authorList>
    </citation>
    <scope>NUCLEOTIDE SEQUENCE [LARGE SCALE GENOMIC DNA]</scope>
</reference>
<reference key="3">
    <citation type="journal article" date="2004" name="Genome Res.">
        <title>The status, quality, and expansion of the NIH full-length cDNA project: the Mammalian Gene Collection (MGC).</title>
        <authorList>
            <consortium name="The MGC Project Team"/>
        </authorList>
    </citation>
    <scope>NUCLEOTIDE SEQUENCE [LARGE SCALE MRNA]</scope>
    <source>
        <tissue>Ovary</tissue>
    </source>
</reference>
<reference key="4">
    <citation type="journal article" date="2011" name="BMC Syst. Biol.">
        <title>Initial characterization of the human central proteome.</title>
        <authorList>
            <person name="Burkard T.R."/>
            <person name="Planyavsky M."/>
            <person name="Kaupe I."/>
            <person name="Breitwieser F.P."/>
            <person name="Buerckstuemmer T."/>
            <person name="Bennett K.L."/>
            <person name="Superti-Furga G."/>
            <person name="Colinge J."/>
        </authorList>
    </citation>
    <scope>IDENTIFICATION BY MASS SPECTROMETRY [LARGE SCALE ANALYSIS]</scope>
</reference>
<reference key="5">
    <citation type="journal article" date="2015" name="Proteomics">
        <title>N-terminome analysis of the human mitochondrial proteome.</title>
        <authorList>
            <person name="Vaca Jacome A.S."/>
            <person name="Rabilloud T."/>
            <person name="Schaeffer-Reiss C."/>
            <person name="Rompais M."/>
            <person name="Ayoub D."/>
            <person name="Lane L."/>
            <person name="Bairoch A."/>
            <person name="Van Dorsselaer A."/>
            <person name="Carapito C."/>
        </authorList>
    </citation>
    <scope>ACETYLATION [LARGE SCALE ANALYSIS] AT MET-1</scope>
    <scope>IDENTIFICATION BY MASS SPECTROMETRY [LARGE SCALE ANALYSIS]</scope>
</reference>
<reference key="6">
    <citation type="journal article" date="2017" name="Nat. Struct. Mol. Biol.">
        <title>Site-specific mapping of the human SUMO proteome reveals co-modification with phosphorylation.</title>
        <authorList>
            <person name="Hendriks I.A."/>
            <person name="Lyon D."/>
            <person name="Young C."/>
            <person name="Jensen L.J."/>
            <person name="Vertegaal A.C."/>
            <person name="Nielsen M.L."/>
        </authorList>
    </citation>
    <scope>SUMOYLATION [LARGE SCALE ANALYSIS] AT LYS-10</scope>
    <scope>IDENTIFICATION BY MASS SPECTROMETRY [LARGE SCALE ANALYSIS]</scope>
</reference>
<proteinExistence type="evidence at protein level"/>